<accession>Q9BRN9</accession>
<accession>B2RDK9</accession>
<accession>Q9H046</accession>
<accession>Q9H651</accession>
<comment type="function">
    <text evidence="4">Probable positive regulator of Notch signaling.</text>
</comment>
<comment type="subcellular location">
    <subcellularLocation>
        <location evidence="8">Membrane</location>
        <topology evidence="8">Multi-pass membrane protein</topology>
    </subcellularLocation>
</comment>
<comment type="alternative products">
    <event type="alternative splicing"/>
    <isoform>
        <id>Q9BRN9-1</id>
        <name>1</name>
        <sequence type="displayed"/>
    </isoform>
    <isoform>
        <id>Q9BRN9-2</id>
        <name>2</name>
        <sequence type="described" ref="VSP_027496"/>
    </isoform>
</comment>
<comment type="tissue specificity">
    <text evidence="3">Widely expressed.</text>
</comment>
<comment type="disease" evidence="4">
    <disease id="DI-03832">
        <name>Alzheimer disease</name>
        <acronym>AD</acronym>
        <description>Alzheimer disease is a neurodegenerative disorder characterized by progressive dementia, loss of cognitive abilities, and deposition of fibrillar amyloid proteins as intraneuronal neurofibrillary tangles, extracellular amyloid plaques and vascular amyloid deposits. The major constituents of these plaques are neurotoxic amyloid-beta protein 40 and amyloid-beta protein 42, that are produced by the proteolysis of the transmembrane APP protein. The cytotoxic C-terminal fragments (CTFs) and the caspase-cleaved products, such as C31, are also implicated in neuronal death.</description>
        <dbReference type="MIM" id="104300"/>
    </disease>
    <text>Disease susceptibility may be associated with variants affecting the gene represented in this entry.</text>
</comment>
<comment type="similarity">
    <text evidence="8">Belongs to the TM2 family.</text>
</comment>
<organism>
    <name type="scientific">Homo sapiens</name>
    <name type="common">Human</name>
    <dbReference type="NCBI Taxonomy" id="9606"/>
    <lineage>
        <taxon>Eukaryota</taxon>
        <taxon>Metazoa</taxon>
        <taxon>Chordata</taxon>
        <taxon>Craniata</taxon>
        <taxon>Vertebrata</taxon>
        <taxon>Euteleostomi</taxon>
        <taxon>Mammalia</taxon>
        <taxon>Eutheria</taxon>
        <taxon>Euarchontoglires</taxon>
        <taxon>Primates</taxon>
        <taxon>Haplorrhini</taxon>
        <taxon>Catarrhini</taxon>
        <taxon>Hominidae</taxon>
        <taxon>Homo</taxon>
    </lineage>
</organism>
<feature type="signal peptide" evidence="1">
    <location>
        <begin position="1"/>
        <end position="29"/>
    </location>
</feature>
<feature type="chain" id="PRO_0000298989" description="TM2 domain-containing protein 3">
    <location>
        <begin position="30"/>
        <end position="247"/>
    </location>
</feature>
<feature type="topological domain" description="Extracellular" evidence="8">
    <location>
        <begin position="30"/>
        <end position="179"/>
    </location>
</feature>
<feature type="transmembrane region" description="Helical" evidence="1">
    <location>
        <begin position="180"/>
        <end position="200"/>
    </location>
</feature>
<feature type="topological domain" description="Cytoplasmic" evidence="8">
    <location>
        <begin position="201"/>
        <end position="215"/>
    </location>
</feature>
<feature type="transmembrane region" description="Helical" evidence="1">
    <location>
        <begin position="216"/>
        <end position="236"/>
    </location>
</feature>
<feature type="topological domain" description="Extracellular" evidence="8">
    <location>
        <begin position="237"/>
        <end position="247"/>
    </location>
</feature>
<feature type="domain" description="TM2" evidence="1">
    <location>
        <begin position="183"/>
        <end position="230"/>
    </location>
</feature>
<feature type="glycosylation site" description="N-linked (GlcNAc...) asparagine" evidence="2">
    <location>
        <position position="87"/>
    </location>
</feature>
<feature type="glycosylation site" description="N-linked (GlcNAc...) asparagine" evidence="2">
    <location>
        <position position="122"/>
    </location>
</feature>
<feature type="glycosylation site" description="N-linked (GlcNAc...) asparagine" evidence="2">
    <location>
        <position position="140"/>
    </location>
</feature>
<feature type="glycosylation site" description="N-linked (GlcNAc...) asparagine" evidence="2">
    <location>
        <position position="157"/>
    </location>
</feature>
<feature type="glycosylation site" description="N-linked (GlcNAc...) asparagine" evidence="2">
    <location>
        <position position="169"/>
    </location>
</feature>
<feature type="glycosylation site" description="N-linked (GlcNAc...) asparagine" evidence="2">
    <location>
        <position position="179"/>
    </location>
</feature>
<feature type="splice variant" id="VSP_027496" description="In isoform 2." evidence="5 6 7">
    <location>
        <begin position="31"/>
        <end position="56"/>
    </location>
</feature>
<feature type="sequence variant" id="VAR_089356" description="Likely risk factor for AD; associated with earlier age-at-onset; dbSNP:rs139709573." evidence="4">
    <original>P</original>
    <variation>L</variation>
    <location>
        <position position="155"/>
    </location>
</feature>
<feature type="sequence conflict" description="In Ref. 1; AAK35066, 2; BAB15415/BAG37956, 4; EAX02315 and 5; AAH06150/AAH08873." evidence="8" ref="1 2 4 5">
    <original>L</original>
    <variation>R</variation>
    <location>
        <position position="6"/>
    </location>
</feature>
<protein>
    <recommendedName>
        <fullName>TM2 domain-containing protein 3</fullName>
    </recommendedName>
    <alternativeName>
        <fullName>Beta-amyloid-binding protein-like protein 2</fullName>
        <shortName>BBP-like protein 2</shortName>
    </alternativeName>
</protein>
<keyword id="KW-0025">Alternative splicing</keyword>
<keyword id="KW-0026">Alzheimer disease</keyword>
<keyword id="KW-1008">Amyloidosis</keyword>
<keyword id="KW-0325">Glycoprotein</keyword>
<keyword id="KW-0472">Membrane</keyword>
<keyword id="KW-0523">Neurodegeneration</keyword>
<keyword id="KW-1267">Proteomics identification</keyword>
<keyword id="KW-1185">Reference proteome</keyword>
<keyword id="KW-0732">Signal</keyword>
<keyword id="KW-0812">Transmembrane</keyword>
<keyword id="KW-1133">Transmembrane helix</keyword>
<proteinExistence type="evidence at protein level"/>
<sequence>MAGGVLPLRGLRALCRVLLFLSQFCILSGGEQSQALAQSIKDPGPTRTFTVVPRAAESTEIPPYVMKCPSNGLCSRLPADCIDCTTNFSCTYGKPVTFDCAVKPSVTCVDQDFKSQKNFIINMTCRFCWQLPETDYECTNSTSCMTVSCPRQRYPANCTVRDHVHCLGNRTFPKMLYCNWTGGYKWSTALALSITLGGFGADRFYLGQWREGLGKLFSFGGLGIWTLIDVLLIGVGYVGPADGSLYI</sequence>
<reference key="1">
    <citation type="journal article" date="2001" name="J. Biol. Chem.">
        <title>Beta-amyloid peptide-induced apoptosis regulated by a novel protein containing a G protein activation module.</title>
        <authorList>
            <person name="Kajkowski E.M."/>
            <person name="Lo C.F."/>
            <person name="Ning X."/>
            <person name="Walker S."/>
            <person name="Sofia H.J."/>
            <person name="Wang W."/>
            <person name="Edris W."/>
            <person name="Chanda P."/>
            <person name="Wagner E."/>
            <person name="Vile S."/>
            <person name="Ryan K."/>
            <person name="McHendry-Rinde B."/>
            <person name="Smith S.C."/>
            <person name="Wood A."/>
            <person name="Rhodes K.J."/>
            <person name="Kennedy J.D."/>
            <person name="Bard J."/>
            <person name="Jacobsen J.S."/>
            <person name="Ozenberger B.A."/>
        </authorList>
    </citation>
    <scope>NUCLEOTIDE SEQUENCE [MRNA] (ISOFORM 2)</scope>
    <scope>TISSUE SPECIFICITY</scope>
</reference>
<reference key="2">
    <citation type="journal article" date="2004" name="Nat. Genet.">
        <title>Complete sequencing and characterization of 21,243 full-length human cDNAs.</title>
        <authorList>
            <person name="Ota T."/>
            <person name="Suzuki Y."/>
            <person name="Nishikawa T."/>
            <person name="Otsuki T."/>
            <person name="Sugiyama T."/>
            <person name="Irie R."/>
            <person name="Wakamatsu A."/>
            <person name="Hayashi K."/>
            <person name="Sato H."/>
            <person name="Nagai K."/>
            <person name="Kimura K."/>
            <person name="Makita H."/>
            <person name="Sekine M."/>
            <person name="Obayashi M."/>
            <person name="Nishi T."/>
            <person name="Shibahara T."/>
            <person name="Tanaka T."/>
            <person name="Ishii S."/>
            <person name="Yamamoto J."/>
            <person name="Saito K."/>
            <person name="Kawai Y."/>
            <person name="Isono Y."/>
            <person name="Nakamura Y."/>
            <person name="Nagahari K."/>
            <person name="Murakami K."/>
            <person name="Yasuda T."/>
            <person name="Iwayanagi T."/>
            <person name="Wagatsuma M."/>
            <person name="Shiratori A."/>
            <person name="Sudo H."/>
            <person name="Hosoiri T."/>
            <person name="Kaku Y."/>
            <person name="Kodaira H."/>
            <person name="Kondo H."/>
            <person name="Sugawara M."/>
            <person name="Takahashi M."/>
            <person name="Kanda K."/>
            <person name="Yokoi T."/>
            <person name="Furuya T."/>
            <person name="Kikkawa E."/>
            <person name="Omura Y."/>
            <person name="Abe K."/>
            <person name="Kamihara K."/>
            <person name="Katsuta N."/>
            <person name="Sato K."/>
            <person name="Tanikawa M."/>
            <person name="Yamazaki M."/>
            <person name="Ninomiya K."/>
            <person name="Ishibashi T."/>
            <person name="Yamashita H."/>
            <person name="Murakawa K."/>
            <person name="Fujimori K."/>
            <person name="Tanai H."/>
            <person name="Kimata M."/>
            <person name="Watanabe M."/>
            <person name="Hiraoka S."/>
            <person name="Chiba Y."/>
            <person name="Ishida S."/>
            <person name="Ono Y."/>
            <person name="Takiguchi S."/>
            <person name="Watanabe S."/>
            <person name="Yosida M."/>
            <person name="Hotuta T."/>
            <person name="Kusano J."/>
            <person name="Kanehori K."/>
            <person name="Takahashi-Fujii A."/>
            <person name="Hara H."/>
            <person name="Tanase T.-O."/>
            <person name="Nomura Y."/>
            <person name="Togiya S."/>
            <person name="Komai F."/>
            <person name="Hara R."/>
            <person name="Takeuchi K."/>
            <person name="Arita M."/>
            <person name="Imose N."/>
            <person name="Musashino K."/>
            <person name="Yuuki H."/>
            <person name="Oshima A."/>
            <person name="Sasaki N."/>
            <person name="Aotsuka S."/>
            <person name="Yoshikawa Y."/>
            <person name="Matsunawa H."/>
            <person name="Ichihara T."/>
            <person name="Shiohata N."/>
            <person name="Sano S."/>
            <person name="Moriya S."/>
            <person name="Momiyama H."/>
            <person name="Satoh N."/>
            <person name="Takami S."/>
            <person name="Terashima Y."/>
            <person name="Suzuki O."/>
            <person name="Nakagawa S."/>
            <person name="Senoh A."/>
            <person name="Mizoguchi H."/>
            <person name="Goto Y."/>
            <person name="Shimizu F."/>
            <person name="Wakebe H."/>
            <person name="Hishigaki H."/>
            <person name="Watanabe T."/>
            <person name="Sugiyama A."/>
            <person name="Takemoto M."/>
            <person name="Kawakami B."/>
            <person name="Yamazaki M."/>
            <person name="Watanabe K."/>
            <person name="Kumagai A."/>
            <person name="Itakura S."/>
            <person name="Fukuzumi Y."/>
            <person name="Fujimori Y."/>
            <person name="Komiyama M."/>
            <person name="Tashiro H."/>
            <person name="Tanigami A."/>
            <person name="Fujiwara T."/>
            <person name="Ono T."/>
            <person name="Yamada K."/>
            <person name="Fujii Y."/>
            <person name="Ozaki K."/>
            <person name="Hirao M."/>
            <person name="Ohmori Y."/>
            <person name="Kawabata A."/>
            <person name="Hikiji T."/>
            <person name="Kobatake N."/>
            <person name="Inagaki H."/>
            <person name="Ikema Y."/>
            <person name="Okamoto S."/>
            <person name="Okitani R."/>
            <person name="Kawakami T."/>
            <person name="Noguchi S."/>
            <person name="Itoh T."/>
            <person name="Shigeta K."/>
            <person name="Senba T."/>
            <person name="Matsumura K."/>
            <person name="Nakajima Y."/>
            <person name="Mizuno T."/>
            <person name="Morinaga M."/>
            <person name="Sasaki M."/>
            <person name="Togashi T."/>
            <person name="Oyama M."/>
            <person name="Hata H."/>
            <person name="Watanabe M."/>
            <person name="Komatsu T."/>
            <person name="Mizushima-Sugano J."/>
            <person name="Satoh T."/>
            <person name="Shirai Y."/>
            <person name="Takahashi Y."/>
            <person name="Nakagawa K."/>
            <person name="Okumura K."/>
            <person name="Nagase T."/>
            <person name="Nomura N."/>
            <person name="Kikuchi H."/>
            <person name="Masuho Y."/>
            <person name="Yamashita R."/>
            <person name="Nakai K."/>
            <person name="Yada T."/>
            <person name="Nakamura Y."/>
            <person name="Ohara O."/>
            <person name="Isogai T."/>
            <person name="Sugano S."/>
        </authorList>
    </citation>
    <scope>NUCLEOTIDE SEQUENCE [LARGE SCALE MRNA] (ISOFORMS 1 AND 2)</scope>
    <source>
        <tissue>Placenta</tissue>
        <tissue>Small intestine</tissue>
    </source>
</reference>
<reference key="3">
    <citation type="journal article" date="2006" name="Nature">
        <title>Analysis of the DNA sequence and duplication history of human chromosome 15.</title>
        <authorList>
            <person name="Zody M.C."/>
            <person name="Garber M."/>
            <person name="Sharpe T."/>
            <person name="Young S.K."/>
            <person name="Rowen L."/>
            <person name="O'Neill K."/>
            <person name="Whittaker C.A."/>
            <person name="Kamal M."/>
            <person name="Chang J.L."/>
            <person name="Cuomo C.A."/>
            <person name="Dewar K."/>
            <person name="FitzGerald M.G."/>
            <person name="Kodira C.D."/>
            <person name="Madan A."/>
            <person name="Qin S."/>
            <person name="Yang X."/>
            <person name="Abbasi N."/>
            <person name="Abouelleil A."/>
            <person name="Arachchi H.M."/>
            <person name="Baradarani L."/>
            <person name="Birditt B."/>
            <person name="Bloom S."/>
            <person name="Bloom T."/>
            <person name="Borowsky M.L."/>
            <person name="Burke J."/>
            <person name="Butler J."/>
            <person name="Cook A."/>
            <person name="DeArellano K."/>
            <person name="DeCaprio D."/>
            <person name="Dorris L. III"/>
            <person name="Dors M."/>
            <person name="Eichler E.E."/>
            <person name="Engels R."/>
            <person name="Fahey J."/>
            <person name="Fleetwood P."/>
            <person name="Friedman C."/>
            <person name="Gearin G."/>
            <person name="Hall J.L."/>
            <person name="Hensley G."/>
            <person name="Johnson E."/>
            <person name="Jones C."/>
            <person name="Kamat A."/>
            <person name="Kaur A."/>
            <person name="Locke D.P."/>
            <person name="Madan A."/>
            <person name="Munson G."/>
            <person name="Jaffe D.B."/>
            <person name="Lui A."/>
            <person name="Macdonald P."/>
            <person name="Mauceli E."/>
            <person name="Naylor J.W."/>
            <person name="Nesbitt R."/>
            <person name="Nicol R."/>
            <person name="O'Leary S.B."/>
            <person name="Ratcliffe A."/>
            <person name="Rounsley S."/>
            <person name="She X."/>
            <person name="Sneddon K.M.B."/>
            <person name="Stewart S."/>
            <person name="Sougnez C."/>
            <person name="Stone S.M."/>
            <person name="Topham K."/>
            <person name="Vincent D."/>
            <person name="Wang S."/>
            <person name="Zimmer A.R."/>
            <person name="Birren B.W."/>
            <person name="Hood L."/>
            <person name="Lander E.S."/>
            <person name="Nusbaum C."/>
        </authorList>
    </citation>
    <scope>NUCLEOTIDE SEQUENCE [LARGE SCALE GENOMIC DNA]</scope>
</reference>
<reference key="4">
    <citation type="submission" date="2005-07" db="EMBL/GenBank/DDBJ databases">
        <authorList>
            <person name="Mural R.J."/>
            <person name="Istrail S."/>
            <person name="Sutton G.G."/>
            <person name="Florea L."/>
            <person name="Halpern A.L."/>
            <person name="Mobarry C.M."/>
            <person name="Lippert R."/>
            <person name="Walenz B."/>
            <person name="Shatkay H."/>
            <person name="Dew I."/>
            <person name="Miller J.R."/>
            <person name="Flanigan M.J."/>
            <person name="Edwards N.J."/>
            <person name="Bolanos R."/>
            <person name="Fasulo D."/>
            <person name="Halldorsson B.V."/>
            <person name="Hannenhalli S."/>
            <person name="Turner R."/>
            <person name="Yooseph S."/>
            <person name="Lu F."/>
            <person name="Nusskern D.R."/>
            <person name="Shue B.C."/>
            <person name="Zheng X.H."/>
            <person name="Zhong F."/>
            <person name="Delcher A.L."/>
            <person name="Huson D.H."/>
            <person name="Kravitz S.A."/>
            <person name="Mouchard L."/>
            <person name="Reinert K."/>
            <person name="Remington K.A."/>
            <person name="Clark A.G."/>
            <person name="Waterman M.S."/>
            <person name="Eichler E.E."/>
            <person name="Adams M.D."/>
            <person name="Hunkapiller M.W."/>
            <person name="Myers E.W."/>
            <person name="Venter J.C."/>
        </authorList>
    </citation>
    <scope>NUCLEOTIDE SEQUENCE [LARGE SCALE GENOMIC DNA]</scope>
</reference>
<reference key="5">
    <citation type="journal article" date="2004" name="Genome Res.">
        <title>The status, quality, and expansion of the NIH full-length cDNA project: the Mammalian Gene Collection (MGC).</title>
        <authorList>
            <consortium name="The MGC Project Team"/>
        </authorList>
    </citation>
    <scope>NUCLEOTIDE SEQUENCE [LARGE SCALE MRNA] (ISOFORMS 1 AND 2)</scope>
    <source>
        <tissue>Colon</tissue>
        <tissue>Muscle</tissue>
    </source>
</reference>
<reference key="6">
    <citation type="journal article" date="2007" name="BMC Genomics">
        <title>The full-ORF clone resource of the German cDNA consortium.</title>
        <authorList>
            <person name="Bechtel S."/>
            <person name="Rosenfelder H."/>
            <person name="Duda A."/>
            <person name="Schmidt C.P."/>
            <person name="Ernst U."/>
            <person name="Wellenreuther R."/>
            <person name="Mehrle A."/>
            <person name="Schuster C."/>
            <person name="Bahr A."/>
            <person name="Bloecker H."/>
            <person name="Heubner D."/>
            <person name="Hoerlein A."/>
            <person name="Michel G."/>
            <person name="Wedler H."/>
            <person name="Koehrer K."/>
            <person name="Ottenwaelder B."/>
            <person name="Poustka A."/>
            <person name="Wiemann S."/>
            <person name="Schupp I."/>
        </authorList>
    </citation>
    <scope>NUCLEOTIDE SEQUENCE [LARGE SCALE MRNA] OF 168-247</scope>
    <source>
        <tissue>Lymph node</tissue>
    </source>
</reference>
<reference key="7">
    <citation type="journal article" date="2016" name="PLoS Genet.">
        <title>Rare Functional Variant in TM2D3 is Associated with Late-Onset Alzheimer's Disease.</title>
        <authorList>
            <consortium name="Cohorts for Heart and Aging Research in Genomic Epidemiology consortium"/>
            <consortium name="Alzheimer's Disease Genetic Consortium"/>
            <consortium name="Genetic and Environmental Risk in Alzheimer's Disease consortium"/>
            <person name="Jakobsdottir J."/>
            <person name="van der Lee S.J."/>
            <person name="Bis J.C."/>
            <person name="Chouraki V."/>
            <person name="Li-Kroeger D."/>
            <person name="Yamamoto S."/>
            <person name="Grove M.L."/>
            <person name="Naj A."/>
            <person name="Vronskaya M."/>
            <person name="Salazar J.L."/>
            <person name="DeStefano A.L."/>
            <person name="Brody J.A."/>
            <person name="Smith A.V."/>
            <person name="Amin N."/>
            <person name="Sims R."/>
            <person name="Ibrahim-Verbaas C.A."/>
            <person name="Choi S.H."/>
            <person name="Satizabal C.L."/>
            <person name="Lopez O.L."/>
            <person name="Beiser A."/>
            <person name="Ikram M.A."/>
            <person name="Garcia M.E."/>
            <person name="Hayward C."/>
            <person name="Varga T.V."/>
            <person name="Ripatti S."/>
            <person name="Franks P.W."/>
            <person name="Hallmans G."/>
            <person name="Rolandsson O."/>
            <person name="Jansson J.H."/>
            <person name="Porteous D.J."/>
            <person name="Salomaa V."/>
            <person name="Eiriksdottir G."/>
            <person name="Rice K.M."/>
            <person name="Bellen H.J."/>
            <person name="Levy D."/>
            <person name="Uitterlinden A.G."/>
            <person name="Emilsson V."/>
            <person name="Rotter J.I."/>
            <person name="Aspelund T."/>
            <person name="O'Donnell C.J."/>
            <person name="Fitzpatrick A.L."/>
            <person name="Launer L.J."/>
            <person name="Hofman A."/>
            <person name="Wang L.S."/>
            <person name="Williams J."/>
            <person name="Schellenberg G.D."/>
            <person name="Boerwinkle E."/>
            <person name="Psaty B.M."/>
            <person name="Seshadri S."/>
            <person name="Shulman J.M."/>
            <person name="Gudnason V."/>
            <person name="van Duijn C.M."/>
        </authorList>
    </citation>
    <scope>FUNCTION</scope>
    <scope>INVOLVEMENT IN AD</scope>
    <scope>VARIANT AD LEU-155</scope>
</reference>
<evidence type="ECO:0000255" key="1"/>
<evidence type="ECO:0000255" key="2">
    <source>
        <dbReference type="PROSITE-ProRule" id="PRU00498"/>
    </source>
</evidence>
<evidence type="ECO:0000269" key="3">
    <source>
    </source>
</evidence>
<evidence type="ECO:0000269" key="4">
    <source>
    </source>
</evidence>
<evidence type="ECO:0000303" key="5">
    <source>
    </source>
</evidence>
<evidence type="ECO:0000303" key="6">
    <source>
    </source>
</evidence>
<evidence type="ECO:0000303" key="7">
    <source>
    </source>
</evidence>
<evidence type="ECO:0000305" key="8"/>
<gene>
    <name type="primary">TM2D3</name>
    <name type="synonym">BLP2</name>
</gene>
<name>TM2D3_HUMAN</name>
<dbReference type="EMBL" id="AF353992">
    <property type="protein sequence ID" value="AAK35066.1"/>
    <property type="molecule type" value="mRNA"/>
</dbReference>
<dbReference type="EMBL" id="AK026257">
    <property type="protein sequence ID" value="BAB15415.1"/>
    <property type="molecule type" value="mRNA"/>
</dbReference>
<dbReference type="EMBL" id="AK315584">
    <property type="protein sequence ID" value="BAG37956.1"/>
    <property type="molecule type" value="mRNA"/>
</dbReference>
<dbReference type="EMBL" id="AC090164">
    <property type="status" value="NOT_ANNOTATED_CDS"/>
    <property type="molecule type" value="Genomic_DNA"/>
</dbReference>
<dbReference type="EMBL" id="CH471101">
    <property type="protein sequence ID" value="EAX02315.1"/>
    <property type="molecule type" value="Genomic_DNA"/>
</dbReference>
<dbReference type="EMBL" id="BC006150">
    <property type="protein sequence ID" value="AAH06150.1"/>
    <property type="molecule type" value="mRNA"/>
</dbReference>
<dbReference type="EMBL" id="BC008873">
    <property type="protein sequence ID" value="AAH08873.1"/>
    <property type="molecule type" value="mRNA"/>
</dbReference>
<dbReference type="EMBL" id="AL512689">
    <property type="protein sequence ID" value="CAC21647.1"/>
    <property type="molecule type" value="mRNA"/>
</dbReference>
<dbReference type="CCDS" id="CCDS10392.1">
    <molecule id="Q9BRN9-2"/>
</dbReference>
<dbReference type="CCDS" id="CCDS10393.1">
    <molecule id="Q9BRN9-1"/>
</dbReference>
<dbReference type="RefSeq" id="NP_079417.2">
    <molecule id="Q9BRN9-2"/>
    <property type="nucleotide sequence ID" value="NM_025141.4"/>
</dbReference>
<dbReference type="RefSeq" id="NP_510883.2">
    <molecule id="Q9BRN9-1"/>
    <property type="nucleotide sequence ID" value="NM_078474.3"/>
</dbReference>
<dbReference type="BioGRID" id="123181">
    <property type="interactions" value="141"/>
</dbReference>
<dbReference type="FunCoup" id="Q9BRN9">
    <property type="interactions" value="1107"/>
</dbReference>
<dbReference type="IntAct" id="Q9BRN9">
    <property type="interactions" value="81"/>
</dbReference>
<dbReference type="STRING" id="9606.ENSP00000330433"/>
<dbReference type="GlyConnect" id="1814">
    <property type="glycosylation" value="4 N-Linked glycans (4 sites)"/>
</dbReference>
<dbReference type="GlyCosmos" id="Q9BRN9">
    <property type="glycosylation" value="4 sites, 4 glycans"/>
</dbReference>
<dbReference type="GlyGen" id="Q9BRN9">
    <property type="glycosylation" value="9 sites, 18 N-linked glycans (6 sites), 2 O-linked glycans (3 sites)"/>
</dbReference>
<dbReference type="iPTMnet" id="Q9BRN9"/>
<dbReference type="PhosphoSitePlus" id="Q9BRN9"/>
<dbReference type="BioMuta" id="TM2D3"/>
<dbReference type="DMDM" id="308153510"/>
<dbReference type="jPOST" id="Q9BRN9"/>
<dbReference type="MassIVE" id="Q9BRN9"/>
<dbReference type="PaxDb" id="9606-ENSP00000330433"/>
<dbReference type="PeptideAtlas" id="Q9BRN9"/>
<dbReference type="ProteomicsDB" id="78790">
    <molecule id="Q9BRN9-1"/>
</dbReference>
<dbReference type="ProteomicsDB" id="78791">
    <molecule id="Q9BRN9-2"/>
</dbReference>
<dbReference type="Pumba" id="Q9BRN9"/>
<dbReference type="Antibodypedia" id="53600">
    <property type="antibodies" value="92 antibodies from 15 providers"/>
</dbReference>
<dbReference type="DNASU" id="80213"/>
<dbReference type="Ensembl" id="ENST00000333202.8">
    <molecule id="Q9BRN9-1"/>
    <property type="protein sequence ID" value="ENSP00000330433.3"/>
    <property type="gene ID" value="ENSG00000184277.13"/>
</dbReference>
<dbReference type="Ensembl" id="ENST00000347970.7">
    <molecule id="Q9BRN9-2"/>
    <property type="protein sequence ID" value="ENSP00000327584.3"/>
    <property type="gene ID" value="ENSG00000184277.13"/>
</dbReference>
<dbReference type="GeneID" id="80213"/>
<dbReference type="KEGG" id="hsa:80213"/>
<dbReference type="MANE-Select" id="ENST00000333202.8">
    <property type="protein sequence ID" value="ENSP00000330433.3"/>
    <property type="RefSeq nucleotide sequence ID" value="NM_078474.3"/>
    <property type="RefSeq protein sequence ID" value="NP_510883.2"/>
</dbReference>
<dbReference type="UCSC" id="uc002bxi.4">
    <molecule id="Q9BRN9-1"/>
    <property type="organism name" value="human"/>
</dbReference>
<dbReference type="AGR" id="HGNC:24128"/>
<dbReference type="CTD" id="80213"/>
<dbReference type="DisGeNET" id="80213"/>
<dbReference type="GeneCards" id="TM2D3"/>
<dbReference type="HGNC" id="HGNC:24128">
    <property type="gene designation" value="TM2D3"/>
</dbReference>
<dbReference type="HPA" id="ENSG00000184277">
    <property type="expression patterns" value="Low tissue specificity"/>
</dbReference>
<dbReference type="MIM" id="104300">
    <property type="type" value="phenotype"/>
</dbReference>
<dbReference type="MIM" id="610014">
    <property type="type" value="gene"/>
</dbReference>
<dbReference type="neXtProt" id="NX_Q9BRN9"/>
<dbReference type="OpenTargets" id="ENSG00000184277"/>
<dbReference type="PharmGKB" id="PA142670800"/>
<dbReference type="VEuPathDB" id="HostDB:ENSG00000184277"/>
<dbReference type="eggNOG" id="KOG4272">
    <property type="taxonomic scope" value="Eukaryota"/>
</dbReference>
<dbReference type="GeneTree" id="ENSGT00940000158389"/>
<dbReference type="InParanoid" id="Q9BRN9"/>
<dbReference type="OMA" id="HANCNSA"/>
<dbReference type="OrthoDB" id="10257855at2759"/>
<dbReference type="PAN-GO" id="Q9BRN9">
    <property type="GO annotations" value="0 GO annotations based on evolutionary models"/>
</dbReference>
<dbReference type="PhylomeDB" id="Q9BRN9"/>
<dbReference type="TreeFam" id="TF314896"/>
<dbReference type="PathwayCommons" id="Q9BRN9"/>
<dbReference type="SignaLink" id="Q9BRN9"/>
<dbReference type="BioGRID-ORCS" id="80213">
    <property type="hits" value="53 hits in 1164 CRISPR screens"/>
</dbReference>
<dbReference type="CD-CODE" id="FB4E32DD">
    <property type="entry name" value="Presynaptic clusters and postsynaptic densities"/>
</dbReference>
<dbReference type="GenomeRNAi" id="80213"/>
<dbReference type="Pharos" id="Q9BRN9">
    <property type="development level" value="Tbio"/>
</dbReference>
<dbReference type="PRO" id="PR:Q9BRN9"/>
<dbReference type="Proteomes" id="UP000005640">
    <property type="component" value="Chromosome 15"/>
</dbReference>
<dbReference type="RNAct" id="Q9BRN9">
    <property type="molecule type" value="protein"/>
</dbReference>
<dbReference type="Bgee" id="ENSG00000184277">
    <property type="expression patterns" value="Expressed in secondary oocyte and 202 other cell types or tissues"/>
</dbReference>
<dbReference type="ExpressionAtlas" id="Q9BRN9">
    <property type="expression patterns" value="baseline and differential"/>
</dbReference>
<dbReference type="GO" id="GO:0005886">
    <property type="term" value="C:plasma membrane"/>
    <property type="evidence" value="ECO:0000255"/>
    <property type="project" value="FlyBase"/>
</dbReference>
<dbReference type="GO" id="GO:0046331">
    <property type="term" value="P:lateral inhibition"/>
    <property type="evidence" value="ECO:0000316"/>
    <property type="project" value="FlyBase"/>
</dbReference>
<dbReference type="GO" id="GO:0045747">
    <property type="term" value="P:positive regulation of Notch signaling pathway"/>
    <property type="evidence" value="ECO:0000250"/>
    <property type="project" value="FlyBase"/>
</dbReference>
<dbReference type="InterPro" id="IPR007829">
    <property type="entry name" value="TM2"/>
</dbReference>
<dbReference type="InterPro" id="IPR050932">
    <property type="entry name" value="TM2D1-3-like"/>
</dbReference>
<dbReference type="PANTHER" id="PTHR21016">
    <property type="entry name" value="BETA-AMYLOID BINDING PROTEIN-RELATED"/>
    <property type="match status" value="1"/>
</dbReference>
<dbReference type="PANTHER" id="PTHR21016:SF7">
    <property type="entry name" value="TM2 DOMAIN-CONTAINING PROTEIN 3"/>
    <property type="match status" value="1"/>
</dbReference>
<dbReference type="Pfam" id="PF05154">
    <property type="entry name" value="TM2"/>
    <property type="match status" value="1"/>
</dbReference>